<name>FLAB1_BRAHO</name>
<proteinExistence type="evidence at protein level"/>
<feature type="chain" id="PRO_0000182637" description="Flagellar filament core protein flaB1">
    <location>
        <begin position="1"/>
        <end position="25" status="greater than"/>
    </location>
</feature>
<feature type="non-terminal residue">
    <location>
        <position position="25"/>
    </location>
</feature>
<evidence type="ECO:0000305" key="1"/>
<gene>
    <name type="primary">flaB1</name>
</gene>
<dbReference type="PIR" id="B47689">
    <property type="entry name" value="B47689"/>
</dbReference>
<dbReference type="GO" id="GO:0055040">
    <property type="term" value="C:periplasmic flagellum"/>
    <property type="evidence" value="ECO:0007669"/>
    <property type="project" value="UniProtKB-SubCell"/>
</dbReference>
<protein>
    <recommendedName>
        <fullName>Flagellar filament core protein flaB1</fullName>
    </recommendedName>
    <alternativeName>
        <fullName>37 kDa core protein</fullName>
    </alternativeName>
</protein>
<accession>P80158</accession>
<organism>
    <name type="scientific">Brachyspira hyodysenteriae</name>
    <name type="common">Treponema hyodysenteriae</name>
    <dbReference type="NCBI Taxonomy" id="159"/>
    <lineage>
        <taxon>Bacteria</taxon>
        <taxon>Pseudomonadati</taxon>
        <taxon>Spirochaetota</taxon>
        <taxon>Spirochaetia</taxon>
        <taxon>Brachyspirales</taxon>
        <taxon>Brachyspiraceae</taxon>
        <taxon>Brachyspira</taxon>
    </lineage>
</organism>
<sequence>MVINNNISAINAQRTLKFRQVDLKK</sequence>
<keyword id="KW-0975">Bacterial flagellum</keyword>
<keyword id="KW-0903">Direct protein sequencing</keyword>
<keyword id="KW-0574">Periplasm</keyword>
<comment type="function">
    <text>Component of the core of the flagella.</text>
</comment>
<comment type="subunit">
    <text>The flagellum consists of an outer layer composed of two sheath proteins, flaA1 (44 kDa) and flaA2 (35 kDa) around a core that contains three proteins flaB1 (37 kDa), flaB2 (34 kDa) and flaB3 (32 kDa).</text>
</comment>
<comment type="subcellular location">
    <subcellularLocation>
        <location>Periplasmic flagellum</location>
    </subcellularLocation>
    <subcellularLocation>
        <location>Periplasm</location>
    </subcellularLocation>
</comment>
<comment type="similarity">
    <text evidence="1">Belongs to the bacterial flagellin family.</text>
</comment>
<reference key="1">
    <citation type="journal article" date="1992" name="J. Gen. Microbiol.">
        <title>The periplasmic flagella of Serpulina (Treponema) hyodysenteriae are composed of two sheath proteins and three core proteins.</title>
        <authorList>
            <person name="Koopman M.B.H."/>
            <person name="Baats E."/>
            <person name="van Vorstenbosch C.J.A.H.V."/>
            <person name="van der Zeijst B.A.M."/>
            <person name="Kusters J.G."/>
        </authorList>
    </citation>
    <scope>PROTEIN SEQUENCE</scope>
    <source>
        <strain>C5</strain>
    </source>
</reference>